<proteinExistence type="inferred from homology"/>
<accession>A1KSN0</accession>
<comment type="function">
    <text evidence="1">Participates in the translocation of lipoproteins from the inner membrane to the outer membrane. Only forms a complex with a lipoprotein if the residue after the N-terminal Cys is not an aspartate (The Asp acts as a targeting signal to indicate that the lipoprotein should stay in the inner membrane).</text>
</comment>
<comment type="subunit">
    <text evidence="1">Monomer.</text>
</comment>
<comment type="subcellular location">
    <subcellularLocation>
        <location evidence="1">Periplasm</location>
    </subcellularLocation>
</comment>
<comment type="similarity">
    <text evidence="1">Belongs to the LolA family.</text>
</comment>
<protein>
    <recommendedName>
        <fullName evidence="1">Outer-membrane lipoprotein carrier protein</fullName>
    </recommendedName>
</protein>
<sequence>MMKPHNLFQFLAVCSLTVSVASAQAGAVDALKQFNNDADGISGSFTQTVQSKKKTQTAHGTFKILRPGLFKWEYTSPYKQTIVGDGQTVWLYDVDLAQVTKSSQDQAIGGSPAAILSNKTALESSYTLKEDGSSNGIDYVLATPKRNNAGYQYIRIGFKGGNLAAMQLKDSFGNQTSISFGGLNTNPQLSRGAFKFTPPKGVDVLSN</sequence>
<evidence type="ECO:0000255" key="1">
    <source>
        <dbReference type="HAMAP-Rule" id="MF_00240"/>
    </source>
</evidence>
<dbReference type="EMBL" id="AM421808">
    <property type="protein sequence ID" value="CAM09860.1"/>
    <property type="molecule type" value="Genomic_DNA"/>
</dbReference>
<dbReference type="RefSeq" id="WP_002219647.1">
    <property type="nucleotide sequence ID" value="NC_008767.1"/>
</dbReference>
<dbReference type="SMR" id="A1KSN0"/>
<dbReference type="GeneID" id="93386547"/>
<dbReference type="KEGG" id="nmc:NMC0566"/>
<dbReference type="HOGENOM" id="CLU_087560_0_1_4"/>
<dbReference type="Proteomes" id="UP000002286">
    <property type="component" value="Chromosome"/>
</dbReference>
<dbReference type="GO" id="GO:0042597">
    <property type="term" value="C:periplasmic space"/>
    <property type="evidence" value="ECO:0007669"/>
    <property type="project" value="UniProtKB-SubCell"/>
</dbReference>
<dbReference type="GO" id="GO:0044874">
    <property type="term" value="P:lipoprotein localization to outer membrane"/>
    <property type="evidence" value="ECO:0007669"/>
    <property type="project" value="UniProtKB-UniRule"/>
</dbReference>
<dbReference type="GO" id="GO:0042953">
    <property type="term" value="P:lipoprotein transport"/>
    <property type="evidence" value="ECO:0007669"/>
    <property type="project" value="InterPro"/>
</dbReference>
<dbReference type="CDD" id="cd16325">
    <property type="entry name" value="LolA"/>
    <property type="match status" value="1"/>
</dbReference>
<dbReference type="FunFam" id="2.50.20.10:FF:000008">
    <property type="entry name" value="Outer-membrane lipoprotein carrier protein"/>
    <property type="match status" value="1"/>
</dbReference>
<dbReference type="Gene3D" id="2.50.20.10">
    <property type="entry name" value="Lipoprotein localisation LolA/LolB/LppX"/>
    <property type="match status" value="1"/>
</dbReference>
<dbReference type="HAMAP" id="MF_00240">
    <property type="entry name" value="LolA"/>
    <property type="match status" value="1"/>
</dbReference>
<dbReference type="InterPro" id="IPR029046">
    <property type="entry name" value="LolA/LolB/LppX"/>
</dbReference>
<dbReference type="InterPro" id="IPR004564">
    <property type="entry name" value="OM_lipoprot_carrier_LolA-like"/>
</dbReference>
<dbReference type="InterPro" id="IPR018323">
    <property type="entry name" value="OM_lipoprot_carrier_LolA_Pbac"/>
</dbReference>
<dbReference type="NCBIfam" id="TIGR00547">
    <property type="entry name" value="lolA"/>
    <property type="match status" value="1"/>
</dbReference>
<dbReference type="PANTHER" id="PTHR35869">
    <property type="entry name" value="OUTER-MEMBRANE LIPOPROTEIN CARRIER PROTEIN"/>
    <property type="match status" value="1"/>
</dbReference>
<dbReference type="PANTHER" id="PTHR35869:SF1">
    <property type="entry name" value="OUTER-MEMBRANE LIPOPROTEIN CARRIER PROTEIN"/>
    <property type="match status" value="1"/>
</dbReference>
<dbReference type="Pfam" id="PF03548">
    <property type="entry name" value="LolA"/>
    <property type="match status" value="1"/>
</dbReference>
<dbReference type="SUPFAM" id="SSF89392">
    <property type="entry name" value="Prokaryotic lipoproteins and lipoprotein localization factors"/>
    <property type="match status" value="1"/>
</dbReference>
<keyword id="KW-0143">Chaperone</keyword>
<keyword id="KW-0574">Periplasm</keyword>
<keyword id="KW-0653">Protein transport</keyword>
<keyword id="KW-0732">Signal</keyword>
<keyword id="KW-0813">Transport</keyword>
<feature type="signal peptide" evidence="1">
    <location>
        <begin position="1"/>
        <end position="23"/>
    </location>
</feature>
<feature type="chain" id="PRO_1000005699" description="Outer-membrane lipoprotein carrier protein">
    <location>
        <begin position="24"/>
        <end position="207"/>
    </location>
</feature>
<gene>
    <name evidence="1" type="primary">lolA</name>
    <name type="ordered locus">NMC0566</name>
</gene>
<name>LOLA_NEIMF</name>
<organism>
    <name type="scientific">Neisseria meningitidis serogroup C / serotype 2a (strain ATCC 700532 / DSM 15464 / FAM18)</name>
    <dbReference type="NCBI Taxonomy" id="272831"/>
    <lineage>
        <taxon>Bacteria</taxon>
        <taxon>Pseudomonadati</taxon>
        <taxon>Pseudomonadota</taxon>
        <taxon>Betaproteobacteria</taxon>
        <taxon>Neisseriales</taxon>
        <taxon>Neisseriaceae</taxon>
        <taxon>Neisseria</taxon>
    </lineage>
</organism>
<reference key="1">
    <citation type="journal article" date="2007" name="PLoS Genet.">
        <title>Meningococcal genetic variation mechanisms viewed through comparative analysis of serogroup C strain FAM18.</title>
        <authorList>
            <person name="Bentley S.D."/>
            <person name="Vernikos G.S."/>
            <person name="Snyder L.A.S."/>
            <person name="Churcher C."/>
            <person name="Arrowsmith C."/>
            <person name="Chillingworth T."/>
            <person name="Cronin A."/>
            <person name="Davis P.H."/>
            <person name="Holroyd N.E."/>
            <person name="Jagels K."/>
            <person name="Maddison M."/>
            <person name="Moule S."/>
            <person name="Rabbinowitsch E."/>
            <person name="Sharp S."/>
            <person name="Unwin L."/>
            <person name="Whitehead S."/>
            <person name="Quail M.A."/>
            <person name="Achtman M."/>
            <person name="Barrell B.G."/>
            <person name="Saunders N.J."/>
            <person name="Parkhill J."/>
        </authorList>
    </citation>
    <scope>NUCLEOTIDE SEQUENCE [LARGE SCALE GENOMIC DNA]</scope>
    <source>
        <strain>ATCC 700532 / DSM 15464 / FAM18</strain>
    </source>
</reference>